<accession>Q7ZT47</accession>
<protein>
    <recommendedName>
        <fullName>DNA replication complex GINS protein PSF1</fullName>
    </recommendedName>
    <alternativeName>
        <fullName>GINS complex subunit 1</fullName>
    </alternativeName>
</protein>
<organism>
    <name type="scientific">Xenopus laevis</name>
    <name type="common">African clawed frog</name>
    <dbReference type="NCBI Taxonomy" id="8355"/>
    <lineage>
        <taxon>Eukaryota</taxon>
        <taxon>Metazoa</taxon>
        <taxon>Chordata</taxon>
        <taxon>Craniata</taxon>
        <taxon>Vertebrata</taxon>
        <taxon>Euteleostomi</taxon>
        <taxon>Amphibia</taxon>
        <taxon>Batrachia</taxon>
        <taxon>Anura</taxon>
        <taxon>Pipoidea</taxon>
        <taxon>Pipidae</taxon>
        <taxon>Xenopodinae</taxon>
        <taxon>Xenopus</taxon>
        <taxon>Xenopus</taxon>
    </lineage>
</organism>
<keyword id="KW-0002">3D-structure</keyword>
<keyword id="KW-0158">Chromosome</keyword>
<keyword id="KW-0235">DNA replication</keyword>
<keyword id="KW-0539">Nucleus</keyword>
<keyword id="KW-1185">Reference proteome</keyword>
<evidence type="ECO:0000269" key="1">
    <source>
    </source>
</evidence>
<evidence type="ECO:0000269" key="2">
    <source>
    </source>
</evidence>
<evidence type="ECO:0000269" key="3">
    <source>
    </source>
</evidence>
<evidence type="ECO:0000305" key="4"/>
<evidence type="ECO:0000312" key="5">
    <source>
        <dbReference type="EMBL" id="BAC66458.1"/>
    </source>
</evidence>
<evidence type="ECO:0000312" key="6">
    <source>
        <dbReference type="EMBL" id="OCT77784.1"/>
    </source>
</evidence>
<evidence type="ECO:0000312" key="7">
    <source>
        <dbReference type="Xenbase" id="XB-GENE-6251527"/>
    </source>
</evidence>
<evidence type="ECO:0007829" key="8">
    <source>
        <dbReference type="PDB" id="8Q6O"/>
    </source>
</evidence>
<reference key="1">
    <citation type="journal article" date="2003" name="Genes Dev.">
        <title>A novel ring-like complex of Xenopus proteins essential for the initiation of DNA replication.</title>
        <authorList>
            <person name="Kubota Y."/>
            <person name="Takase Y."/>
            <person name="Komori Y."/>
            <person name="Hashimoto Y."/>
            <person name="Arata T."/>
            <person name="Kamimura Y."/>
            <person name="Araki H."/>
            <person name="Takisawa H."/>
        </authorList>
    </citation>
    <scope>NUCLEOTIDE SEQUENCE [GENOMIC DNA]</scope>
    <scope>FUNCTION</scope>
    <scope>IDENTIFICATION IN THE GINS COMPLEX</scope>
    <scope>SUBCELLULAR LOCATION</scope>
</reference>
<reference key="2">
    <citation type="journal article" date="2016" name="Nature">
        <title>Genome evolution in the allotetraploid frog Xenopus laevis.</title>
        <authorList>
            <person name="Session A.M."/>
            <person name="Uno Y."/>
            <person name="Kwon T."/>
            <person name="Chapman J.A."/>
            <person name="Toyoda A."/>
            <person name="Takahashi S."/>
            <person name="Fukui A."/>
            <person name="Hikosaka A."/>
            <person name="Suzuki A."/>
            <person name="Kondo M."/>
            <person name="van Heeringen S.J."/>
            <person name="Quigley I."/>
            <person name="Heinz S."/>
            <person name="Ogino H."/>
            <person name="Ochi H."/>
            <person name="Hellsten U."/>
            <person name="Lyons J.B."/>
            <person name="Simakov O."/>
            <person name="Putnam N."/>
            <person name="Stites J."/>
            <person name="Kuroki Y."/>
            <person name="Tanaka T."/>
            <person name="Michiue T."/>
            <person name="Watanabe M."/>
            <person name="Bogdanovic O."/>
            <person name="Lister R."/>
            <person name="Georgiou G."/>
            <person name="Paranjpe S.S."/>
            <person name="van Kruijsbergen I."/>
            <person name="Shu S."/>
            <person name="Carlson J."/>
            <person name="Kinoshita T."/>
            <person name="Ohta Y."/>
            <person name="Mawaribuchi S."/>
            <person name="Jenkins J."/>
            <person name="Grimwood J."/>
            <person name="Schmutz J."/>
            <person name="Mitros T."/>
            <person name="Mozaffari S.V."/>
            <person name="Suzuki Y."/>
            <person name="Haramoto Y."/>
            <person name="Yamamoto T.S."/>
            <person name="Takagi C."/>
            <person name="Heald R."/>
            <person name="Miller K."/>
            <person name="Haudenschild C."/>
            <person name="Kitzman J."/>
            <person name="Nakayama T."/>
            <person name="Izutsu Y."/>
            <person name="Robert J."/>
            <person name="Fortriede J."/>
            <person name="Burns K."/>
            <person name="Lotay V."/>
            <person name="Karimi K."/>
            <person name="Yasuoka Y."/>
            <person name="Dichmann D.S."/>
            <person name="Flajnik M.F."/>
            <person name="Houston D.W."/>
            <person name="Shendure J."/>
            <person name="DuPasquier L."/>
            <person name="Vize P.D."/>
            <person name="Zorn A.M."/>
            <person name="Ito M."/>
            <person name="Marcotte E.M."/>
            <person name="Wallingford J.B."/>
            <person name="Ito Y."/>
            <person name="Asashima M."/>
            <person name="Ueno N."/>
            <person name="Matsuda Y."/>
            <person name="Veenstra G.J."/>
            <person name="Fujiyama A."/>
            <person name="Harland R.M."/>
            <person name="Taira M."/>
            <person name="Rokhsar D.S."/>
        </authorList>
    </citation>
    <scope>NUCLEOTIDE SEQUENCE [LARGE SCALE GENOMIC DNA]</scope>
    <source>
        <strain>J</strain>
    </source>
</reference>
<reference key="3">
    <citation type="submission" date="2004-06" db="EMBL/GenBank/DDBJ databases">
        <authorList>
            <consortium name="NIH - Xenopus Gene Collection (XGC) project"/>
        </authorList>
    </citation>
    <scope>NUCLEOTIDE SEQUENCE [LARGE SCALE MRNA]</scope>
    <source>
        <tissue>Ovary</tissue>
    </source>
</reference>
<reference key="4">
    <citation type="journal article" date="2019" name="Life. Sci Alliance">
        <title>Mitotic replisome disassembly depends on TRAIP ubiquitin ligase activity.</title>
        <authorList>
            <person name="Priego Moreno S."/>
            <person name="Jones R.M."/>
            <person name="Poovathumkadavil D."/>
            <person name="Scaramuzza S."/>
            <person name="Gambus A."/>
        </authorList>
    </citation>
    <scope>IDENTIFICATION IN THE CMG HELICASE COMPLEX</scope>
</reference>
<reference key="5">
    <citation type="journal article" date="2019" name="Nature">
        <title>TRAIP is a master regulator of DNA interstrand crosslink repair.</title>
        <authorList>
            <person name="Wu R.A."/>
            <person name="Semlow D.R."/>
            <person name="Kamimae-Lanning A.N."/>
            <person name="Kochenova O.V."/>
            <person name="Chistol G."/>
            <person name="Hodskinson M.R."/>
            <person name="Amunugama R."/>
            <person name="Sparks J.L."/>
            <person name="Wang M."/>
            <person name="Deng L."/>
            <person name="Mimoso C.A."/>
            <person name="Low E."/>
            <person name="Patel K.J."/>
            <person name="Walter J.C."/>
        </authorList>
    </citation>
    <scope>IDENTIFICATION IN THE CMG HELICASE COMPLEX</scope>
</reference>
<name>PSF1_XENLA</name>
<dbReference type="EMBL" id="AB097168">
    <property type="protein sequence ID" value="BAC66458.1"/>
    <property type="molecule type" value="Genomic_DNA"/>
</dbReference>
<dbReference type="EMBL" id="CM004475">
    <property type="protein sequence ID" value="OCT77784.1"/>
    <property type="molecule type" value="Genomic_DNA"/>
</dbReference>
<dbReference type="EMBL" id="BC072857">
    <property type="protein sequence ID" value="AAH72857.1"/>
    <property type="molecule type" value="mRNA"/>
</dbReference>
<dbReference type="RefSeq" id="NP_001085502.1">
    <property type="nucleotide sequence ID" value="NM_001092033.1"/>
</dbReference>
<dbReference type="PDB" id="8Q6O">
    <property type="method" value="EM"/>
    <property type="resolution" value="3.14 A"/>
    <property type="chains" value="G/M=1-196"/>
</dbReference>
<dbReference type="PDBsum" id="8Q6O"/>
<dbReference type="EMDB" id="EMD-18191"/>
<dbReference type="EMDB" id="EMD-18195"/>
<dbReference type="SMR" id="Q7ZT47"/>
<dbReference type="STRING" id="8355.Q7ZT47"/>
<dbReference type="PaxDb" id="8355-Q7ZT47"/>
<dbReference type="DNASU" id="443928"/>
<dbReference type="GeneID" id="443928"/>
<dbReference type="KEGG" id="xla:443928"/>
<dbReference type="AGR" id="Xenbase:XB-GENE-6251527"/>
<dbReference type="CTD" id="443928"/>
<dbReference type="Xenbase" id="XB-GENE-6251527">
    <property type="gene designation" value="gins1.S"/>
</dbReference>
<dbReference type="OMA" id="MFCEKAT"/>
<dbReference type="OrthoDB" id="10252587at2759"/>
<dbReference type="Proteomes" id="UP000186698">
    <property type="component" value="Chromosome 5S"/>
</dbReference>
<dbReference type="Proteomes" id="UP000694892">
    <property type="component" value="Chromosome 5S"/>
</dbReference>
<dbReference type="Bgee" id="443928">
    <property type="expression patterns" value="Expressed in oocyte and 19 other cell types or tissues"/>
</dbReference>
<dbReference type="GO" id="GO:0071162">
    <property type="term" value="C:CMG complex"/>
    <property type="evidence" value="ECO:0000314"/>
    <property type="project" value="UniProtKB"/>
</dbReference>
<dbReference type="GO" id="GO:0000811">
    <property type="term" value="C:GINS complex"/>
    <property type="evidence" value="ECO:0000353"/>
    <property type="project" value="UniProtKB"/>
</dbReference>
<dbReference type="GO" id="GO:0003682">
    <property type="term" value="F:chromatin binding"/>
    <property type="evidence" value="ECO:0000314"/>
    <property type="project" value="UniProtKB"/>
</dbReference>
<dbReference type="GO" id="GO:0006260">
    <property type="term" value="P:DNA replication"/>
    <property type="evidence" value="ECO:0000315"/>
    <property type="project" value="UniProtKB"/>
</dbReference>
<dbReference type="GO" id="GO:1902983">
    <property type="term" value="P:DNA strand elongation involved in mitotic DNA replication"/>
    <property type="evidence" value="ECO:0000318"/>
    <property type="project" value="GO_Central"/>
</dbReference>
<dbReference type="CDD" id="cd11710">
    <property type="entry name" value="GINS_A_psf1"/>
    <property type="match status" value="1"/>
</dbReference>
<dbReference type="CDD" id="cd21696">
    <property type="entry name" value="GINS_B_Psf1"/>
    <property type="match status" value="1"/>
</dbReference>
<dbReference type="FunFam" id="1.20.58.1030:FF:000001">
    <property type="entry name" value="DNA replication complex GINS protein PSF1"/>
    <property type="match status" value="1"/>
</dbReference>
<dbReference type="Gene3D" id="1.20.58.1030">
    <property type="match status" value="1"/>
</dbReference>
<dbReference type="InterPro" id="IPR021151">
    <property type="entry name" value="GINS_A"/>
</dbReference>
<dbReference type="InterPro" id="IPR036224">
    <property type="entry name" value="GINS_bundle-like_dom_sf"/>
</dbReference>
<dbReference type="InterPro" id="IPR005339">
    <property type="entry name" value="GINS_Psf1"/>
</dbReference>
<dbReference type="InterPro" id="IPR056783">
    <property type="entry name" value="PSF1_C"/>
</dbReference>
<dbReference type="PANTHER" id="PTHR12914:SF2">
    <property type="entry name" value="DNA REPLICATION COMPLEX GINS PROTEIN PSF1"/>
    <property type="match status" value="1"/>
</dbReference>
<dbReference type="PANTHER" id="PTHR12914">
    <property type="entry name" value="PARTNER OF SLD5"/>
    <property type="match status" value="1"/>
</dbReference>
<dbReference type="Pfam" id="PF24997">
    <property type="entry name" value="PSF1_C"/>
    <property type="match status" value="1"/>
</dbReference>
<dbReference type="Pfam" id="PF05916">
    <property type="entry name" value="Sld5"/>
    <property type="match status" value="1"/>
</dbReference>
<dbReference type="SUPFAM" id="SSF158573">
    <property type="entry name" value="GINS helical bundle-like"/>
    <property type="match status" value="1"/>
</dbReference>
<feature type="chain" id="PRO_0000451423" description="DNA replication complex GINS protein PSF1">
    <location>
        <begin position="1"/>
        <end position="196"/>
    </location>
</feature>
<feature type="helix" evidence="8">
    <location>
        <begin position="4"/>
        <end position="15"/>
    </location>
</feature>
<feature type="helix" evidence="8">
    <location>
        <begin position="27"/>
        <end position="52"/>
    </location>
</feature>
<feature type="helix" evidence="8">
    <location>
        <begin position="56"/>
        <end position="58"/>
    </location>
</feature>
<feature type="helix" evidence="8">
    <location>
        <begin position="59"/>
        <end position="93"/>
    </location>
</feature>
<feature type="helix" evidence="8">
    <location>
        <begin position="100"/>
        <end position="104"/>
    </location>
</feature>
<feature type="helix" evidence="8">
    <location>
        <begin position="108"/>
        <end position="127"/>
    </location>
</feature>
<feature type="strand" evidence="8">
    <location>
        <begin position="128"/>
        <end position="132"/>
    </location>
</feature>
<feature type="strand" evidence="8">
    <location>
        <begin position="136"/>
        <end position="138"/>
    </location>
</feature>
<feature type="strand" evidence="8">
    <location>
        <begin position="149"/>
        <end position="154"/>
    </location>
</feature>
<feature type="strand" evidence="8">
    <location>
        <begin position="158"/>
        <end position="160"/>
    </location>
</feature>
<feature type="strand" evidence="8">
    <location>
        <begin position="166"/>
        <end position="168"/>
    </location>
</feature>
<feature type="helix" evidence="8">
    <location>
        <begin position="179"/>
        <end position="181"/>
    </location>
</feature>
<feature type="helix" evidence="8">
    <location>
        <begin position="183"/>
        <end position="188"/>
    </location>
</feature>
<feature type="strand" evidence="8">
    <location>
        <begin position="190"/>
        <end position="194"/>
    </location>
</feature>
<sequence length="196" mass="23139">MFCEKAIELIRELQRASDGQLPAFNEDGIRQILEEMKALYEQNQADVNEAKTEGRSDLIPTIKFRHCCLLRNRRCIVAYLYDRLLRIRALRWEYGSVLPSALRFHMSTEEMDWFNQYKRSLATYMRSLGGEEGLDITQDMKPPKSLYIEVRCLRDYGEFEIDDGTTILLKKNSQHFLPRWKCEQLIRQGVLEHVLS</sequence>
<comment type="function">
    <text evidence="1">Required for correct functioning of the GINS complex, a complex that plays an essential role in the initiation of DNA replication, and progression of DNA replication forks. GINS complex is a core component of CDC45-MCM-GINS (CMG) helicase, the molecular machine that unwinds template DNA during replication, and around which the replisome is built.</text>
</comment>
<comment type="subunit">
    <text evidence="1 2 3">Component of the GINS complex which is a heterotetramer of gins1/psf1, gins2/psf2, gins3/psf3 and gins4/sld5 (PubMed:12730133). Component of the CMG helicase complex, composed of the mcm2-7 complex, the GINS complex and cdc45 (PubMed:30842657, PubMed:30979826).</text>
</comment>
<comment type="subcellular location">
    <subcellularLocation>
        <location evidence="1">Nucleus</location>
    </subcellularLocation>
    <subcellularLocation>
        <location evidence="1">Chromosome</location>
    </subcellularLocation>
    <text evidence="1">Associates with chromatin.</text>
</comment>
<comment type="similarity">
    <text evidence="4">Belongs to the GINS1/PSF1 family.</text>
</comment>
<gene>
    <name evidence="7" type="primary">gins1</name>
    <name evidence="5" type="synonym">Psf1</name>
    <name evidence="6" type="ORF">XELAEV_18028879mg</name>
</gene>
<proteinExistence type="evidence at protein level"/>